<comment type="function">
    <text evidence="1">GTP-binding protein involved in nucleocytoplasmic transport. Required for the import of protein into the nucleus and also for RNA export. Involved in chromatin condensation and control of cell cycle (By similarity).</text>
</comment>
<comment type="subunit">
    <text evidence="2 5 6 7 8">Found in a nuclear export complex with RanGTP, exportin and pre-miRNA (By similarity). Interacts with RanBP1a and RanBP1b (PubMed:9025305). Interacts with PHRIP1 (PubMed:17530257). Interacts with KPNB1 (PubMed:23582042). Binds to PHIP1 (PubMed:18621982).</text>
</comment>
<comment type="subcellular location">
    <subcellularLocation>
        <location evidence="5">Nucleus</location>
    </subcellularLocation>
    <subcellularLocation>
        <location evidence="5">Nucleus envelope</location>
    </subcellularLocation>
    <text>Localized in the perinuclear region with the highest concentration at the nuclear envelope at the interphase.</text>
</comment>
<comment type="developmental stage">
    <text evidence="6">RAN2 transcripts mRNA interacts with PHIP1 to be distributed toward the cell plate during cytokinesis.</text>
</comment>
<comment type="similarity">
    <text evidence="3 10">Belongs to the small GTPase superfamily. Ran family.</text>
</comment>
<keyword id="KW-0342">GTP-binding</keyword>
<keyword id="KW-0547">Nucleotide-binding</keyword>
<keyword id="KW-0539">Nucleus</keyword>
<keyword id="KW-0653">Protein transport</keyword>
<keyword id="KW-1185">Reference proteome</keyword>
<keyword id="KW-0813">Transport</keyword>
<proteinExistence type="evidence at protein level"/>
<protein>
    <recommendedName>
        <fullName evidence="9">GTP-binding nuclear protein Ran-2</fullName>
    </recommendedName>
    <alternativeName>
        <fullName evidence="9">Ras-related nuclear protein 2</fullName>
    </alternativeName>
</protein>
<reference key="1">
    <citation type="journal article" date="1997" name="Plant J.">
        <title>Characterization of proteins that interact with the GTP-bound form of the regulatory GTPase Ran in Arabidopsis.</title>
        <authorList>
            <person name="Haizel T."/>
            <person name="Merkle T."/>
            <person name="Pay A."/>
            <person name="Fejes E."/>
            <person name="Nagy F."/>
        </authorList>
    </citation>
    <scope>NUCLEOTIDE SEQUENCE [MRNA]</scope>
    <scope>INTERACTION WITH RANBP1A AND RANBP1B</scope>
</reference>
<reference key="2">
    <citation type="journal article" date="2000" name="Nature">
        <title>Sequence and analysis of chromosome 5 of the plant Arabidopsis thaliana.</title>
        <authorList>
            <person name="Tabata S."/>
            <person name="Kaneko T."/>
            <person name="Nakamura Y."/>
            <person name="Kotani H."/>
            <person name="Kato T."/>
            <person name="Asamizu E."/>
            <person name="Miyajima N."/>
            <person name="Sasamoto S."/>
            <person name="Kimura T."/>
            <person name="Hosouchi T."/>
            <person name="Kawashima K."/>
            <person name="Kohara M."/>
            <person name="Matsumoto M."/>
            <person name="Matsuno A."/>
            <person name="Muraki A."/>
            <person name="Nakayama S."/>
            <person name="Nakazaki N."/>
            <person name="Naruo K."/>
            <person name="Okumura S."/>
            <person name="Shinpo S."/>
            <person name="Takeuchi C."/>
            <person name="Wada T."/>
            <person name="Watanabe A."/>
            <person name="Yamada M."/>
            <person name="Yasuda M."/>
            <person name="Sato S."/>
            <person name="de la Bastide M."/>
            <person name="Huang E."/>
            <person name="Spiegel L."/>
            <person name="Gnoj L."/>
            <person name="O'Shaughnessy A."/>
            <person name="Preston R."/>
            <person name="Habermann K."/>
            <person name="Murray J."/>
            <person name="Johnson D."/>
            <person name="Rohlfing T."/>
            <person name="Nelson J."/>
            <person name="Stoneking T."/>
            <person name="Pepin K."/>
            <person name="Spieth J."/>
            <person name="Sekhon M."/>
            <person name="Armstrong J."/>
            <person name="Becker M."/>
            <person name="Belter E."/>
            <person name="Cordum H."/>
            <person name="Cordes M."/>
            <person name="Courtney L."/>
            <person name="Courtney W."/>
            <person name="Dante M."/>
            <person name="Du H."/>
            <person name="Edwards J."/>
            <person name="Fryman J."/>
            <person name="Haakensen B."/>
            <person name="Lamar E."/>
            <person name="Latreille P."/>
            <person name="Leonard S."/>
            <person name="Meyer R."/>
            <person name="Mulvaney E."/>
            <person name="Ozersky P."/>
            <person name="Riley A."/>
            <person name="Strowmatt C."/>
            <person name="Wagner-McPherson C."/>
            <person name="Wollam A."/>
            <person name="Yoakum M."/>
            <person name="Bell M."/>
            <person name="Dedhia N."/>
            <person name="Parnell L."/>
            <person name="Shah R."/>
            <person name="Rodriguez M."/>
            <person name="Hoon See L."/>
            <person name="Vil D."/>
            <person name="Baker J."/>
            <person name="Kirchoff K."/>
            <person name="Toth K."/>
            <person name="King L."/>
            <person name="Bahret A."/>
            <person name="Miller B."/>
            <person name="Marra M.A."/>
            <person name="Martienssen R."/>
            <person name="McCombie W.R."/>
            <person name="Wilson R.K."/>
            <person name="Murphy G."/>
            <person name="Bancroft I."/>
            <person name="Volckaert G."/>
            <person name="Wambutt R."/>
            <person name="Duesterhoeft A."/>
            <person name="Stiekema W."/>
            <person name="Pohl T."/>
            <person name="Entian K.-D."/>
            <person name="Terryn N."/>
            <person name="Hartley N."/>
            <person name="Bent E."/>
            <person name="Johnson S."/>
            <person name="Langham S.-A."/>
            <person name="McCullagh B."/>
            <person name="Robben J."/>
            <person name="Grymonprez B."/>
            <person name="Zimmermann W."/>
            <person name="Ramsperger U."/>
            <person name="Wedler H."/>
            <person name="Balke K."/>
            <person name="Wedler E."/>
            <person name="Peters S."/>
            <person name="van Staveren M."/>
            <person name="Dirkse W."/>
            <person name="Mooijman P."/>
            <person name="Klein Lankhorst R."/>
            <person name="Weitzenegger T."/>
            <person name="Bothe G."/>
            <person name="Rose M."/>
            <person name="Hauf J."/>
            <person name="Berneiser S."/>
            <person name="Hempel S."/>
            <person name="Feldpausch M."/>
            <person name="Lamberth S."/>
            <person name="Villarroel R."/>
            <person name="Gielen J."/>
            <person name="Ardiles W."/>
            <person name="Bents O."/>
            <person name="Lemcke K."/>
            <person name="Kolesov G."/>
            <person name="Mayer K.F.X."/>
            <person name="Rudd S."/>
            <person name="Schoof H."/>
            <person name="Schueller C."/>
            <person name="Zaccaria P."/>
            <person name="Mewes H.-W."/>
            <person name="Bevan M."/>
            <person name="Fransz P.F."/>
        </authorList>
    </citation>
    <scope>NUCLEOTIDE SEQUENCE [LARGE SCALE GENOMIC DNA]</scope>
    <source>
        <strain>cv. Columbia</strain>
    </source>
</reference>
<reference key="3">
    <citation type="journal article" date="2017" name="Plant J.">
        <title>Araport11: a complete reannotation of the Arabidopsis thaliana reference genome.</title>
        <authorList>
            <person name="Cheng C.Y."/>
            <person name="Krishnakumar V."/>
            <person name="Chan A.P."/>
            <person name="Thibaud-Nissen F."/>
            <person name="Schobel S."/>
            <person name="Town C.D."/>
        </authorList>
    </citation>
    <scope>GENOME REANNOTATION</scope>
    <source>
        <strain>cv. Columbia</strain>
    </source>
</reference>
<reference key="4">
    <citation type="journal article" date="2003" name="Science">
        <title>Empirical analysis of transcriptional activity in the Arabidopsis genome.</title>
        <authorList>
            <person name="Yamada K."/>
            <person name="Lim J."/>
            <person name="Dale J.M."/>
            <person name="Chen H."/>
            <person name="Shinn P."/>
            <person name="Palm C.J."/>
            <person name="Southwick A.M."/>
            <person name="Wu H.C."/>
            <person name="Kim C.J."/>
            <person name="Nguyen M."/>
            <person name="Pham P.K."/>
            <person name="Cheuk R.F."/>
            <person name="Karlin-Newmann G."/>
            <person name="Liu S.X."/>
            <person name="Lam B."/>
            <person name="Sakano H."/>
            <person name="Wu T."/>
            <person name="Yu G."/>
            <person name="Miranda M."/>
            <person name="Quach H.L."/>
            <person name="Tripp M."/>
            <person name="Chang C.H."/>
            <person name="Lee J.M."/>
            <person name="Toriumi M.J."/>
            <person name="Chan M.M."/>
            <person name="Tang C.C."/>
            <person name="Onodera C.S."/>
            <person name="Deng J.M."/>
            <person name="Akiyama K."/>
            <person name="Ansari Y."/>
            <person name="Arakawa T."/>
            <person name="Banh J."/>
            <person name="Banno F."/>
            <person name="Bowser L."/>
            <person name="Brooks S.Y."/>
            <person name="Carninci P."/>
            <person name="Chao Q."/>
            <person name="Choy N."/>
            <person name="Enju A."/>
            <person name="Goldsmith A.D."/>
            <person name="Gurjal M."/>
            <person name="Hansen N.F."/>
            <person name="Hayashizaki Y."/>
            <person name="Johnson-Hopson C."/>
            <person name="Hsuan V.W."/>
            <person name="Iida K."/>
            <person name="Karnes M."/>
            <person name="Khan S."/>
            <person name="Koesema E."/>
            <person name="Ishida J."/>
            <person name="Jiang P.X."/>
            <person name="Jones T."/>
            <person name="Kawai J."/>
            <person name="Kamiya A."/>
            <person name="Meyers C."/>
            <person name="Nakajima M."/>
            <person name="Narusaka M."/>
            <person name="Seki M."/>
            <person name="Sakurai T."/>
            <person name="Satou M."/>
            <person name="Tamse R."/>
            <person name="Vaysberg M."/>
            <person name="Wallender E.K."/>
            <person name="Wong C."/>
            <person name="Yamamura Y."/>
            <person name="Yuan S."/>
            <person name="Shinozaki K."/>
            <person name="Davis R.W."/>
            <person name="Theologis A."/>
            <person name="Ecker J.R."/>
        </authorList>
    </citation>
    <scope>NUCLEOTIDE SEQUENCE [LARGE SCALE MRNA]</scope>
    <source>
        <strain>cv. Columbia</strain>
    </source>
</reference>
<reference key="5">
    <citation type="submission" date="2006-07" db="EMBL/GenBank/DDBJ databases">
        <title>Large-scale analysis of RIKEN Arabidopsis full-length (RAFL) cDNAs.</title>
        <authorList>
            <person name="Totoki Y."/>
            <person name="Seki M."/>
            <person name="Ishida J."/>
            <person name="Nakajima M."/>
            <person name="Enju A."/>
            <person name="Kamiya A."/>
            <person name="Narusaka M."/>
            <person name="Shin-i T."/>
            <person name="Nakagawa M."/>
            <person name="Sakamoto N."/>
            <person name="Oishi K."/>
            <person name="Kohara Y."/>
            <person name="Kobayashi M."/>
            <person name="Toyoda A."/>
            <person name="Sakaki Y."/>
            <person name="Sakurai T."/>
            <person name="Iida K."/>
            <person name="Akiyama K."/>
            <person name="Satou M."/>
            <person name="Toyoda T."/>
            <person name="Konagaya A."/>
            <person name="Carninci P."/>
            <person name="Kawai J."/>
            <person name="Hayashizaki Y."/>
            <person name="Shinozaki K."/>
        </authorList>
    </citation>
    <scope>NUCLEOTIDE SEQUENCE [LARGE SCALE MRNA]</scope>
    <source>
        <strain>cv. Columbia</strain>
    </source>
</reference>
<reference key="6">
    <citation type="journal article" date="1994" name="Plant J.">
        <title>Phenotype of the fission yeast cell cycle regulatory mutant pim1-46 is suppressed by a tobacco cDNA encoding a small, Ran-like GTP-binding protein.</title>
        <authorList>
            <person name="Merkle T."/>
            <person name="Haizel T."/>
            <person name="Matsumoto T."/>
            <person name="Harter K."/>
            <person name="Dallmann G."/>
            <person name="Nagy F."/>
        </authorList>
    </citation>
    <scope>NUCLEOTIDE SEQUENCE [MRNA] OF 19-221</scope>
</reference>
<reference key="7">
    <citation type="journal article" date="2003" name="Plant Physiol.">
        <title>Analysis of the small GTPase gene superfamily of Arabidopsis.</title>
        <authorList>
            <person name="Vernoud V."/>
            <person name="Horton A.C."/>
            <person name="Yang Z."/>
            <person name="Nielsen E."/>
        </authorList>
    </citation>
    <scope>GENE FAMILY</scope>
    <scope>NOMENCLATURE</scope>
</reference>
<reference key="8">
    <citation type="journal article" date="2007" name="Plant Cell Rep.">
        <title>Perinuclear and nuclear envelope localizations of Arabidopsis Ran proteins.</title>
        <authorList>
            <person name="Ma L."/>
            <person name="Hong Z."/>
            <person name="Zhang Z."/>
        </authorList>
    </citation>
    <scope>SUBCELLULAR LOCATION</scope>
    <scope>INTERACTION WITH PHRIP1</scope>
</reference>
<reference key="9">
    <citation type="journal article" date="2008" name="Plant Physiol.">
        <title>A novel RNA-binding protein associated with cell plate formation.</title>
        <authorList>
            <person name="Ma L."/>
            <person name="Xie B."/>
            <person name="Hong Z."/>
            <person name="Verma D.P.S."/>
            <person name="Zhang Z."/>
        </authorList>
    </citation>
    <scope>INTERACTION WITH PHIP1</scope>
    <scope>DEVELOPMENTAL STAGE</scope>
</reference>
<reference key="10">
    <citation type="journal article" date="2013" name="Plant J.">
        <title>An Arabidopsis homolog of importin beta1 is required for ABA response and drought tolerance.</title>
        <authorList>
            <person name="Luo Y."/>
            <person name="Wang Z."/>
            <person name="Ji H."/>
            <person name="Fang H."/>
            <person name="Wang S."/>
            <person name="Tian L."/>
            <person name="Li X."/>
        </authorList>
    </citation>
    <scope>INTERACTION WITH KPNB1</scope>
</reference>
<gene>
    <name evidence="9" type="primary">RAN2</name>
    <name evidence="11" type="ordered locus">At5g20020</name>
    <name evidence="12" type="ORF">F28I16.170</name>
</gene>
<feature type="chain" id="PRO_0000208718" description="GTP-binding nuclear protein Ran-2">
    <location>
        <begin position="1"/>
        <end position="221"/>
    </location>
</feature>
<feature type="domain" description="Small GTPase Ran-type" evidence="3">
    <location>
        <begin position="10"/>
        <end position="174"/>
    </location>
</feature>
<feature type="region of interest" description="Switch-I" evidence="3">
    <location>
        <begin position="40"/>
        <end position="48"/>
    </location>
</feature>
<feature type="region of interest" description="Switch-II" evidence="3">
    <location>
        <begin position="71"/>
        <end position="87"/>
    </location>
</feature>
<feature type="region of interest" description="Disordered" evidence="4">
    <location>
        <begin position="202"/>
        <end position="221"/>
    </location>
</feature>
<feature type="compositionally biased region" description="Low complexity" evidence="4">
    <location>
        <begin position="202"/>
        <end position="212"/>
    </location>
</feature>
<feature type="binding site" evidence="2">
    <location>
        <begin position="21"/>
        <end position="28"/>
    </location>
    <ligand>
        <name>GTP</name>
        <dbReference type="ChEBI" id="CHEBI:37565"/>
    </ligand>
</feature>
<feature type="binding site" evidence="2">
    <location>
        <position position="71"/>
    </location>
    <ligand>
        <name>GTP</name>
        <dbReference type="ChEBI" id="CHEBI:37565"/>
    </ligand>
</feature>
<feature type="binding site" evidence="2">
    <location>
        <begin position="125"/>
        <end position="128"/>
    </location>
    <ligand>
        <name>GTP</name>
        <dbReference type="ChEBI" id="CHEBI:37565"/>
    </ligand>
</feature>
<feature type="binding site" evidence="2">
    <location>
        <begin position="153"/>
        <end position="155"/>
    </location>
    <ligand>
        <name>GTP</name>
        <dbReference type="ChEBI" id="CHEBI:37565"/>
    </ligand>
</feature>
<feature type="sequence conflict" description="In Ref. 1; CAA66048 and 6; AAA32852." evidence="10" ref="1 6">
    <original>QQ</original>
    <variation>PK</variation>
    <location>
        <begin position="198"/>
        <end position="199"/>
    </location>
</feature>
<organism>
    <name type="scientific">Arabidopsis thaliana</name>
    <name type="common">Mouse-ear cress</name>
    <dbReference type="NCBI Taxonomy" id="3702"/>
    <lineage>
        <taxon>Eukaryota</taxon>
        <taxon>Viridiplantae</taxon>
        <taxon>Streptophyta</taxon>
        <taxon>Embryophyta</taxon>
        <taxon>Tracheophyta</taxon>
        <taxon>Spermatophyta</taxon>
        <taxon>Magnoliopsida</taxon>
        <taxon>eudicotyledons</taxon>
        <taxon>Gunneridae</taxon>
        <taxon>Pentapetalae</taxon>
        <taxon>rosids</taxon>
        <taxon>malvids</taxon>
        <taxon>Brassicales</taxon>
        <taxon>Brassicaceae</taxon>
        <taxon>Camelineae</taxon>
        <taxon>Arabidopsis</taxon>
    </lineage>
</organism>
<name>RAN2_ARATH</name>
<dbReference type="EMBL" id="X97380">
    <property type="protein sequence ID" value="CAA66048.1"/>
    <property type="molecule type" value="mRNA"/>
</dbReference>
<dbReference type="EMBL" id="AF296836">
    <property type="status" value="NOT_ANNOTATED_CDS"/>
    <property type="molecule type" value="Genomic_DNA"/>
</dbReference>
<dbReference type="EMBL" id="CP002688">
    <property type="protein sequence ID" value="AED92780.1"/>
    <property type="molecule type" value="Genomic_DNA"/>
</dbReference>
<dbReference type="EMBL" id="AF370337">
    <property type="protein sequence ID" value="AAK44152.1"/>
    <property type="molecule type" value="mRNA"/>
</dbReference>
<dbReference type="EMBL" id="AY062997">
    <property type="protein sequence ID" value="AAL34171.1"/>
    <property type="molecule type" value="mRNA"/>
</dbReference>
<dbReference type="EMBL" id="BT000424">
    <property type="protein sequence ID" value="AAN17401.1"/>
    <property type="molecule type" value="mRNA"/>
</dbReference>
<dbReference type="EMBL" id="BT000659">
    <property type="protein sequence ID" value="AAN31806.1"/>
    <property type="molecule type" value="mRNA"/>
</dbReference>
<dbReference type="EMBL" id="BT006264">
    <property type="protein sequence ID" value="AAP13372.1"/>
    <property type="molecule type" value="mRNA"/>
</dbReference>
<dbReference type="EMBL" id="AK226813">
    <property type="protein sequence ID" value="BAE98909.1"/>
    <property type="molecule type" value="mRNA"/>
</dbReference>
<dbReference type="EMBL" id="L16790">
    <property type="protein sequence ID" value="AAA32852.1"/>
    <property type="molecule type" value="mRNA"/>
</dbReference>
<dbReference type="RefSeq" id="NP_197502.1">
    <property type="nucleotide sequence ID" value="NM_122009.4"/>
</dbReference>
<dbReference type="SMR" id="P41917"/>
<dbReference type="BioGRID" id="17400">
    <property type="interactions" value="9"/>
</dbReference>
<dbReference type="FunCoup" id="P41917">
    <property type="interactions" value="4123"/>
</dbReference>
<dbReference type="IntAct" id="P41917">
    <property type="interactions" value="4"/>
</dbReference>
<dbReference type="STRING" id="3702.P41917"/>
<dbReference type="PaxDb" id="3702-AT5G20020.1"/>
<dbReference type="EnsemblPlants" id="AT5G20020.1">
    <property type="protein sequence ID" value="AT5G20020.1"/>
    <property type="gene ID" value="AT5G20020"/>
</dbReference>
<dbReference type="GeneID" id="832124"/>
<dbReference type="Gramene" id="AT5G20020.1">
    <property type="protein sequence ID" value="AT5G20020.1"/>
    <property type="gene ID" value="AT5G20020"/>
</dbReference>
<dbReference type="KEGG" id="ath:AT5G20020"/>
<dbReference type="Araport" id="AT5G20020"/>
<dbReference type="TAIR" id="AT5G20020">
    <property type="gene designation" value="RAN2"/>
</dbReference>
<dbReference type="eggNOG" id="KOG0096">
    <property type="taxonomic scope" value="Eukaryota"/>
</dbReference>
<dbReference type="HOGENOM" id="CLU_041217_13_0_1"/>
<dbReference type="InParanoid" id="P41917"/>
<dbReference type="OMA" id="NACGVEN"/>
<dbReference type="OrthoDB" id="2012850at2759"/>
<dbReference type="PhylomeDB" id="P41917"/>
<dbReference type="CD-CODE" id="4299E36E">
    <property type="entry name" value="Nucleolus"/>
</dbReference>
<dbReference type="PRO" id="PR:P41917"/>
<dbReference type="Proteomes" id="UP000006548">
    <property type="component" value="Chromosome 5"/>
</dbReference>
<dbReference type="ExpressionAtlas" id="P41917">
    <property type="expression patterns" value="baseline and differential"/>
</dbReference>
<dbReference type="GO" id="GO:0005737">
    <property type="term" value="C:cytoplasm"/>
    <property type="evidence" value="ECO:0007005"/>
    <property type="project" value="TAIR"/>
</dbReference>
<dbReference type="GO" id="GO:0005794">
    <property type="term" value="C:Golgi apparatus"/>
    <property type="evidence" value="ECO:0007005"/>
    <property type="project" value="TAIR"/>
</dbReference>
<dbReference type="GO" id="GO:0005635">
    <property type="term" value="C:nuclear envelope"/>
    <property type="evidence" value="ECO:0007669"/>
    <property type="project" value="UniProtKB-SubCell"/>
</dbReference>
<dbReference type="GO" id="GO:0005730">
    <property type="term" value="C:nucleolus"/>
    <property type="evidence" value="ECO:0007005"/>
    <property type="project" value="TAIR"/>
</dbReference>
<dbReference type="GO" id="GO:0005634">
    <property type="term" value="C:nucleus"/>
    <property type="evidence" value="ECO:0007005"/>
    <property type="project" value="TAIR"/>
</dbReference>
<dbReference type="GO" id="GO:0009536">
    <property type="term" value="C:plastid"/>
    <property type="evidence" value="ECO:0007005"/>
    <property type="project" value="TAIR"/>
</dbReference>
<dbReference type="GO" id="GO:0005525">
    <property type="term" value="F:GTP binding"/>
    <property type="evidence" value="ECO:0000250"/>
    <property type="project" value="TAIR"/>
</dbReference>
<dbReference type="GO" id="GO:0003924">
    <property type="term" value="F:GTPase activity"/>
    <property type="evidence" value="ECO:0000250"/>
    <property type="project" value="TAIR"/>
</dbReference>
<dbReference type="GO" id="GO:0003729">
    <property type="term" value="F:mRNA binding"/>
    <property type="evidence" value="ECO:0000314"/>
    <property type="project" value="TAIR"/>
</dbReference>
<dbReference type="GO" id="GO:0006606">
    <property type="term" value="P:protein import into nucleus"/>
    <property type="evidence" value="ECO:0000304"/>
    <property type="project" value="TAIR"/>
</dbReference>
<dbReference type="CDD" id="cd00877">
    <property type="entry name" value="Ran"/>
    <property type="match status" value="1"/>
</dbReference>
<dbReference type="FunFam" id="3.40.50.300:FF:000369">
    <property type="entry name" value="GTP-binding nuclear protein"/>
    <property type="match status" value="1"/>
</dbReference>
<dbReference type="Gene3D" id="3.40.50.300">
    <property type="entry name" value="P-loop containing nucleotide triphosphate hydrolases"/>
    <property type="match status" value="1"/>
</dbReference>
<dbReference type="InterPro" id="IPR027417">
    <property type="entry name" value="P-loop_NTPase"/>
</dbReference>
<dbReference type="InterPro" id="IPR002041">
    <property type="entry name" value="Ran_GTPase"/>
</dbReference>
<dbReference type="InterPro" id="IPR005225">
    <property type="entry name" value="Small_GTP-bd"/>
</dbReference>
<dbReference type="InterPro" id="IPR001806">
    <property type="entry name" value="Small_GTPase"/>
</dbReference>
<dbReference type="NCBIfam" id="TIGR00231">
    <property type="entry name" value="small_GTP"/>
    <property type="match status" value="1"/>
</dbReference>
<dbReference type="PANTHER" id="PTHR24071:SF42">
    <property type="entry name" value="GTP-BINDING NUCLEAR PROTEIN RAN-1-RELATED"/>
    <property type="match status" value="1"/>
</dbReference>
<dbReference type="PANTHER" id="PTHR24071">
    <property type="entry name" value="RAN GTPASE"/>
    <property type="match status" value="1"/>
</dbReference>
<dbReference type="Pfam" id="PF00071">
    <property type="entry name" value="Ras"/>
    <property type="match status" value="1"/>
</dbReference>
<dbReference type="PRINTS" id="PR00627">
    <property type="entry name" value="GTPRANTC4"/>
</dbReference>
<dbReference type="SMART" id="SM00175">
    <property type="entry name" value="RAB"/>
    <property type="match status" value="1"/>
</dbReference>
<dbReference type="SMART" id="SM00176">
    <property type="entry name" value="RAN"/>
    <property type="match status" value="1"/>
</dbReference>
<dbReference type="SMART" id="SM00173">
    <property type="entry name" value="RAS"/>
    <property type="match status" value="1"/>
</dbReference>
<dbReference type="SMART" id="SM00174">
    <property type="entry name" value="RHO"/>
    <property type="match status" value="1"/>
</dbReference>
<dbReference type="SUPFAM" id="SSF52540">
    <property type="entry name" value="P-loop containing nucleoside triphosphate hydrolases"/>
    <property type="match status" value="1"/>
</dbReference>
<dbReference type="PROSITE" id="PS51418">
    <property type="entry name" value="RAN"/>
    <property type="match status" value="1"/>
</dbReference>
<sequence length="221" mass="25062">MALPNQQTVDYPSFKLVIVGDGGTGKTTFVKRHLTGEFEKKYEPTIGVEVHPLDFFTNCGKIRFYCWDTAGQEKFGGLRDGYYIHGQCAIIMFDVTARLTYKNVPTWHRDLCRVCENIPIVLCGNKVDVKNRQVKAKQVTFHRKKNLQYYEISAKSNYNFEKPFLYLARKLAGDQNLHFVESPALAPPEVHLDIAAQQQNEADLAAAAAQPLPDDDDDAFE</sequence>
<evidence type="ECO:0000250" key="1"/>
<evidence type="ECO:0000250" key="2">
    <source>
        <dbReference type="UniProtKB" id="P62825"/>
    </source>
</evidence>
<evidence type="ECO:0000255" key="3">
    <source>
        <dbReference type="PROSITE-ProRule" id="PRU00752"/>
    </source>
</evidence>
<evidence type="ECO:0000256" key="4">
    <source>
        <dbReference type="SAM" id="MobiDB-lite"/>
    </source>
</evidence>
<evidence type="ECO:0000269" key="5">
    <source>
    </source>
</evidence>
<evidence type="ECO:0000269" key="6">
    <source>
    </source>
</evidence>
<evidence type="ECO:0000269" key="7">
    <source>
    </source>
</evidence>
<evidence type="ECO:0000269" key="8">
    <source>
    </source>
</evidence>
<evidence type="ECO:0000303" key="9">
    <source>
    </source>
</evidence>
<evidence type="ECO:0000305" key="10"/>
<evidence type="ECO:0000312" key="11">
    <source>
        <dbReference type="Araport" id="AT5G20020"/>
    </source>
</evidence>
<evidence type="ECO:0000312" key="12">
    <source>
        <dbReference type="EMBL" id="AF296836"/>
    </source>
</evidence>
<accession>P41917</accession>
<accession>Q0WVD9</accession>
<accession>Q94K33</accession>